<proteinExistence type="evidence at transcript level"/>
<sequence length="146" mass="16966">MSINIDIKKITDLLNSSILFPDDLQELLREKYIVLERKSNGTPTVAHIYKTMARFDNKSIYRIAKFLFMNRPDVIKLLFLEDVEPLLPYKSINISINNTEYPQLEGPIGTKIALLELFNAFRTGISEPIPYYYLPLRKDINNIVTK</sequence>
<gene>
    <name type="primary">OPG114</name>
    <name type="ORF">MPXVgp099</name>
</gene>
<reference key="1">
    <citation type="journal article" date="2013" name="Am. J. Trop. Med. Hyg.">
        <title>Detection of human monkeypox in the republic of the congo following intensive community education.</title>
        <authorList>
            <person name="Reynolds M.G."/>
            <person name="Emerson G.L."/>
            <person name="Pukuta E."/>
            <person name="Karhemere S."/>
            <person name="Muyembe J.J."/>
            <person name="Bikindou A."/>
            <person name="McCollum A.M."/>
            <person name="Moses C."/>
            <person name="Wilkins K."/>
            <person name="Zhao H."/>
            <person name="Damon I.K."/>
            <person name="Karem K.L."/>
            <person name="Li Y."/>
            <person name="Carroll D.S."/>
            <person name="Mombouli J.V."/>
        </authorList>
    </citation>
    <scope>NUCLEOTIDE SEQUENCE [GENOMIC DNA]</scope>
    <source>
        <strain>ROC2010</strain>
    </source>
</reference>
<reference key="2">
    <citation type="journal article" date="2022" name="J. Infect. Dis.">
        <title>Exportation of Monkeypox virus from the African continent.</title>
        <authorList>
            <person name="Mauldin M.R."/>
            <person name="McCollum A.M."/>
            <person name="Nakazawa Y.J."/>
            <person name="Mandra A."/>
            <person name="Whitehouse E.R."/>
            <person name="Davidson W."/>
            <person name="Zhao H."/>
            <person name="Gao J."/>
            <person name="Li Y."/>
            <person name="Doty J."/>
            <person name="Yinka-Ogunleye A."/>
            <person name="Akinpelu A."/>
            <person name="Aruna O."/>
            <person name="Naidoo D."/>
            <person name="Lewandowski K."/>
            <person name="Afrough B."/>
            <person name="Graham V."/>
            <person name="Aarons E."/>
            <person name="Hewson R."/>
            <person name="Vipond R."/>
            <person name="Dunning J."/>
            <person name="Chand M."/>
            <person name="Brown C."/>
            <person name="Cohen-Gihon I."/>
            <person name="Erez N."/>
            <person name="Shifman O."/>
            <person name="Israeli O."/>
            <person name="Sharon M."/>
            <person name="Schwartz E."/>
            <person name="Beth-Din A."/>
            <person name="Zvi A."/>
            <person name="Mak T.M."/>
            <person name="Ng Y.K."/>
            <person name="Cui L."/>
            <person name="Lin R.T.P."/>
            <person name="Olson V.A."/>
            <person name="Brooks T."/>
            <person name="Paran N."/>
            <person name="Ihekweazu C."/>
            <person name="Reynolds M.G."/>
        </authorList>
    </citation>
    <scope>NUCLEOTIDE SEQUENCE [LARGE SCALE GENOMIC DNA]</scope>
    <source>
        <strain>MPXV-M5312_HM12_Rivers</strain>
    </source>
</reference>
<evidence type="ECO:0000250" key="1">
    <source>
        <dbReference type="UniProtKB" id="P04300"/>
    </source>
</evidence>
<evidence type="ECO:0000305" key="2"/>
<name>PG114_MONPV</name>
<feature type="chain" id="PRO_0000457429" description="Core protein OPG114">
    <location>
        <begin position="1"/>
        <end position="146"/>
    </location>
</feature>
<dbReference type="EMBL" id="KC257461">
    <property type="protein sequence ID" value="AGF37003.1"/>
    <property type="molecule type" value="Genomic_DNA"/>
</dbReference>
<dbReference type="EMBL" id="MT903340">
    <property type="protein sequence ID" value="QNP12969.1"/>
    <property type="molecule type" value="Genomic_DNA"/>
</dbReference>
<dbReference type="RefSeq" id="NP_536526.1">
    <property type="nucleotide sequence ID" value="NC_003310.1"/>
</dbReference>
<dbReference type="RefSeq" id="YP_010377096.1">
    <property type="nucleotide sequence ID" value="NC_063383.1"/>
</dbReference>
<dbReference type="GeneID" id="72551509"/>
<dbReference type="GeneID" id="928881"/>
<dbReference type="KEGG" id="vg:928881"/>
<dbReference type="Proteomes" id="UP000516359">
    <property type="component" value="Genome"/>
</dbReference>
<dbReference type="GO" id="GO:0044423">
    <property type="term" value="C:virion component"/>
    <property type="evidence" value="ECO:0007669"/>
    <property type="project" value="UniProtKB-KW"/>
</dbReference>
<dbReference type="InterPro" id="IPR006791">
    <property type="entry name" value="Pox_D2"/>
</dbReference>
<dbReference type="Pfam" id="PF04701">
    <property type="entry name" value="Pox_D2"/>
    <property type="match status" value="1"/>
</dbReference>
<organism>
    <name type="scientific">Monkeypox virus</name>
    <dbReference type="NCBI Taxonomy" id="10244"/>
    <lineage>
        <taxon>Viruses</taxon>
        <taxon>Varidnaviria</taxon>
        <taxon>Bamfordvirae</taxon>
        <taxon>Nucleocytoviricota</taxon>
        <taxon>Pokkesviricetes</taxon>
        <taxon>Chitovirales</taxon>
        <taxon>Poxviridae</taxon>
        <taxon>Chordopoxvirinae</taxon>
        <taxon>Orthopoxvirus</taxon>
    </lineage>
</organism>
<protein>
    <recommendedName>
        <fullName>Core protein OPG114</fullName>
    </recommendedName>
</protein>
<comment type="function">
    <text evidence="1">Late protein which is part of a large complex required for early virion morphogenesis. This complex participates in the formation of virosomes and the incorporation of virosomal contents into nascent immature virions.</text>
</comment>
<comment type="subunit">
    <text evidence="1">Part of a complex composed of the kinase OPG054, OPG092, OPG100, OPG114, OPG115, OPG142 and OPG157.</text>
</comment>
<comment type="subcellular location">
    <subcellularLocation>
        <location evidence="1">Virion</location>
    </subcellularLocation>
    <text evidence="1">Localizes to the virion core.</text>
</comment>
<comment type="induction">
    <text>Expressed in the late phase of the viral replicative cycle.</text>
</comment>
<comment type="similarity">
    <text evidence="2">Belongs to the orthopoxvirus OPG114 family.</text>
</comment>
<keyword id="KW-0426">Late protein</keyword>
<keyword id="KW-1185">Reference proteome</keyword>
<keyword id="KW-0946">Virion</keyword>
<accession>M1KJ15</accession>
<organismHost>
    <name type="scientific">Cynomys gunnisoni</name>
    <name type="common">Gunnison's prairie dog</name>
    <name type="synonym">Spermophilus gunnisoni</name>
    <dbReference type="NCBI Taxonomy" id="45479"/>
</organismHost>
<organismHost>
    <name type="scientific">Cynomys leucurus</name>
    <name type="common">White-tailed prairie dog</name>
    <dbReference type="NCBI Taxonomy" id="99825"/>
</organismHost>
<organismHost>
    <name type="scientific">Cynomys ludovicianus</name>
    <name type="common">Black-tailed prairie dog</name>
    <dbReference type="NCBI Taxonomy" id="45480"/>
</organismHost>
<organismHost>
    <name type="scientific">Cynomys mexicanus</name>
    <name type="common">Mexican prairie dog</name>
    <dbReference type="NCBI Taxonomy" id="99826"/>
</organismHost>
<organismHost>
    <name type="scientific">Cynomys parvidens</name>
    <name type="common">Utah prairie dog</name>
    <dbReference type="NCBI Taxonomy" id="99827"/>
</organismHost>
<organismHost>
    <name type="scientific">Gliridae</name>
    <name type="common">dormice</name>
    <dbReference type="NCBI Taxonomy" id="30650"/>
</organismHost>
<organismHost>
    <name type="scientific">Heliosciurus ruwenzorii</name>
    <name type="common">Ruwenzori sun squirrel</name>
    <dbReference type="NCBI Taxonomy" id="226685"/>
</organismHost>
<organismHost>
    <name type="scientific">Homo sapiens</name>
    <name type="common">Human</name>
    <dbReference type="NCBI Taxonomy" id="9606"/>
</organismHost>
<organismHost>
    <name type="scientific">Mus musculus</name>
    <name type="common">Mouse</name>
    <dbReference type="NCBI Taxonomy" id="10090"/>
</organismHost>